<proteinExistence type="inferred from homology"/>
<protein>
    <recommendedName>
        <fullName evidence="1">Uncharacterized N-acetyltransferase BC_3921</fullName>
        <ecNumber evidence="1">2.3.1.-</ecNumber>
    </recommendedName>
</protein>
<organism>
    <name type="scientific">Bacillus cereus (strain ATCC 14579 / DSM 31 / CCUG 7414 / JCM 2152 / NBRC 15305 / NCIMB 9373 / NCTC 2599 / NRRL B-3711)</name>
    <dbReference type="NCBI Taxonomy" id="226900"/>
    <lineage>
        <taxon>Bacteria</taxon>
        <taxon>Bacillati</taxon>
        <taxon>Bacillota</taxon>
        <taxon>Bacilli</taxon>
        <taxon>Bacillales</taxon>
        <taxon>Bacillaceae</taxon>
        <taxon>Bacillus</taxon>
        <taxon>Bacillus cereus group</taxon>
    </lineage>
</organism>
<accession>Q819P6</accession>
<dbReference type="EC" id="2.3.1.-" evidence="1"/>
<dbReference type="EMBL" id="AE016877">
    <property type="protein sequence ID" value="AAP10842.1"/>
    <property type="molecule type" value="Genomic_DNA"/>
</dbReference>
<dbReference type="RefSeq" id="NP_833641.1">
    <property type="nucleotide sequence ID" value="NC_004722.1"/>
</dbReference>
<dbReference type="RefSeq" id="WP_000506694.1">
    <property type="nucleotide sequence ID" value="NZ_CP138336.1"/>
</dbReference>
<dbReference type="SMR" id="Q819P6"/>
<dbReference type="STRING" id="226900.BC_3921"/>
<dbReference type="KEGG" id="bce:BC3921"/>
<dbReference type="PATRIC" id="fig|226900.8.peg.4043"/>
<dbReference type="HOGENOM" id="CLU_136634_0_0_9"/>
<dbReference type="OrthoDB" id="2242710at2"/>
<dbReference type="Proteomes" id="UP000001417">
    <property type="component" value="Chromosome"/>
</dbReference>
<dbReference type="GO" id="GO:0016747">
    <property type="term" value="F:acyltransferase activity, transferring groups other than amino-acyl groups"/>
    <property type="evidence" value="ECO:0007669"/>
    <property type="project" value="UniProtKB-UniRule"/>
</dbReference>
<dbReference type="CDD" id="cd04301">
    <property type="entry name" value="NAT_SF"/>
    <property type="match status" value="1"/>
</dbReference>
<dbReference type="Gene3D" id="3.40.630.30">
    <property type="match status" value="1"/>
</dbReference>
<dbReference type="HAMAP" id="MF_00824">
    <property type="entry name" value="Acetyltransf_YlbP"/>
    <property type="match status" value="1"/>
</dbReference>
<dbReference type="InterPro" id="IPR016181">
    <property type="entry name" value="Acyl_CoA_acyltransferase"/>
</dbReference>
<dbReference type="InterPro" id="IPR000182">
    <property type="entry name" value="GNAT_dom"/>
</dbReference>
<dbReference type="InterPro" id="IPR017274">
    <property type="entry name" value="YlbP"/>
</dbReference>
<dbReference type="NCBIfam" id="NF010241">
    <property type="entry name" value="PRK13688.1"/>
    <property type="match status" value="1"/>
</dbReference>
<dbReference type="Pfam" id="PF00583">
    <property type="entry name" value="Acetyltransf_1"/>
    <property type="match status" value="1"/>
</dbReference>
<dbReference type="PIRSF" id="PIRSF037732">
    <property type="entry name" value="YlbP_prd"/>
    <property type="match status" value="1"/>
</dbReference>
<dbReference type="SUPFAM" id="SSF55729">
    <property type="entry name" value="Acyl-CoA N-acyltransferases (Nat)"/>
    <property type="match status" value="1"/>
</dbReference>
<name>Y3921_BACCR</name>
<reference key="1">
    <citation type="journal article" date="2003" name="Nature">
        <title>Genome sequence of Bacillus cereus and comparative analysis with Bacillus anthracis.</title>
        <authorList>
            <person name="Ivanova N."/>
            <person name="Sorokin A."/>
            <person name="Anderson I."/>
            <person name="Galleron N."/>
            <person name="Candelon B."/>
            <person name="Kapatral V."/>
            <person name="Bhattacharyya A."/>
            <person name="Reznik G."/>
            <person name="Mikhailova N."/>
            <person name="Lapidus A."/>
            <person name="Chu L."/>
            <person name="Mazur M."/>
            <person name="Goltsman E."/>
            <person name="Larsen N."/>
            <person name="D'Souza M."/>
            <person name="Walunas T."/>
            <person name="Grechkin Y."/>
            <person name="Pusch G."/>
            <person name="Haselkorn R."/>
            <person name="Fonstein M."/>
            <person name="Ehrlich S.D."/>
            <person name="Overbeek R."/>
            <person name="Kyrpides N.C."/>
        </authorList>
    </citation>
    <scope>NUCLEOTIDE SEQUENCE [LARGE SCALE GENOMIC DNA]</scope>
    <source>
        <strain>ATCC 14579 / DSM 31 / CCUG 7414 / JCM 2152 / NBRC 15305 / NCIMB 9373 / NCTC 2599 / NRRL B-3711</strain>
    </source>
</reference>
<keyword id="KW-0012">Acyltransferase</keyword>
<keyword id="KW-1185">Reference proteome</keyword>
<keyword id="KW-0808">Transferase</keyword>
<gene>
    <name type="ordered locus">BC_3921</name>
</gene>
<sequence length="157" mass="17988">MGFPKVERLLINYKTLDEFKKFKGCGAQELSMLEELQANIIENDSESPFYGIYYGGSLIARMSLYMKRNGGEPFEITGPYLELYKLEVLPTFQKQGFGQMLVNHAKQMQFPIKTIARIHSAGFWDKLNFNPVSVTDGDFYIWHPETNLNAVTNEESA</sequence>
<feature type="chain" id="PRO_0000232473" description="Uncharacterized N-acetyltransferase BC_3921">
    <location>
        <begin position="1"/>
        <end position="157"/>
    </location>
</feature>
<feature type="domain" description="N-acetyltransferase" evidence="1">
    <location>
        <begin position="9"/>
        <end position="154"/>
    </location>
</feature>
<evidence type="ECO:0000255" key="1">
    <source>
        <dbReference type="HAMAP-Rule" id="MF_00824"/>
    </source>
</evidence>